<accession>Q1CRV1</accession>
<reference key="1">
    <citation type="journal article" date="2006" name="Proc. Natl. Acad. Sci. U.S.A.">
        <title>The complete genome sequence of a chronic atrophic gastritis Helicobacter pylori strain: evolution during disease progression.</title>
        <authorList>
            <person name="Oh J.D."/>
            <person name="Kling-Baeckhed H."/>
            <person name="Giannakis M."/>
            <person name="Xu J."/>
            <person name="Fulton R.S."/>
            <person name="Fulton L.A."/>
            <person name="Cordum H.S."/>
            <person name="Wang C."/>
            <person name="Elliott G."/>
            <person name="Edwards J."/>
            <person name="Mardis E.R."/>
            <person name="Engstrand L.G."/>
            <person name="Gordon J.I."/>
        </authorList>
    </citation>
    <scope>NUCLEOTIDE SEQUENCE [LARGE SCALE GENOMIC DNA]</scope>
    <source>
        <strain>HPAG1</strain>
    </source>
</reference>
<sequence length="122" mass="13280">MIQSFTRLNVADNSGAKEIMCIKVLGGSHKRYASVGSVIVASVKKAIPNGKVKRGQVVKAVVVRTKKEIQRKNGSLVRFDDNAAVILDAKKDPVGTRIFGPVSREVRYANFMKIISLAPEVV</sequence>
<protein>
    <recommendedName>
        <fullName evidence="1">Large ribosomal subunit protein uL14</fullName>
    </recommendedName>
    <alternativeName>
        <fullName evidence="2">50S ribosomal protein L14</fullName>
    </alternativeName>
</protein>
<proteinExistence type="inferred from homology"/>
<dbReference type="EMBL" id="CP000241">
    <property type="protein sequence ID" value="ABF85321.1"/>
    <property type="molecule type" value="Genomic_DNA"/>
</dbReference>
<dbReference type="RefSeq" id="WP_000616110.1">
    <property type="nucleotide sequence ID" value="NC_008086.1"/>
</dbReference>
<dbReference type="SMR" id="Q1CRV1"/>
<dbReference type="GeneID" id="31757675"/>
<dbReference type="KEGG" id="hpa:HPAG1_1254"/>
<dbReference type="HOGENOM" id="CLU_095071_2_1_7"/>
<dbReference type="GO" id="GO:0022625">
    <property type="term" value="C:cytosolic large ribosomal subunit"/>
    <property type="evidence" value="ECO:0007669"/>
    <property type="project" value="TreeGrafter"/>
</dbReference>
<dbReference type="GO" id="GO:0070180">
    <property type="term" value="F:large ribosomal subunit rRNA binding"/>
    <property type="evidence" value="ECO:0007669"/>
    <property type="project" value="TreeGrafter"/>
</dbReference>
<dbReference type="GO" id="GO:0003735">
    <property type="term" value="F:structural constituent of ribosome"/>
    <property type="evidence" value="ECO:0007669"/>
    <property type="project" value="InterPro"/>
</dbReference>
<dbReference type="GO" id="GO:0006412">
    <property type="term" value="P:translation"/>
    <property type="evidence" value="ECO:0007669"/>
    <property type="project" value="UniProtKB-UniRule"/>
</dbReference>
<dbReference type="CDD" id="cd00337">
    <property type="entry name" value="Ribosomal_uL14"/>
    <property type="match status" value="1"/>
</dbReference>
<dbReference type="FunFam" id="2.40.150.20:FF:000001">
    <property type="entry name" value="50S ribosomal protein L14"/>
    <property type="match status" value="1"/>
</dbReference>
<dbReference type="Gene3D" id="2.40.150.20">
    <property type="entry name" value="Ribosomal protein L14"/>
    <property type="match status" value="1"/>
</dbReference>
<dbReference type="HAMAP" id="MF_01367">
    <property type="entry name" value="Ribosomal_uL14"/>
    <property type="match status" value="1"/>
</dbReference>
<dbReference type="InterPro" id="IPR000218">
    <property type="entry name" value="Ribosomal_uL14"/>
</dbReference>
<dbReference type="InterPro" id="IPR005745">
    <property type="entry name" value="Ribosomal_uL14_bac-type"/>
</dbReference>
<dbReference type="InterPro" id="IPR019972">
    <property type="entry name" value="Ribosomal_uL14_CS"/>
</dbReference>
<dbReference type="InterPro" id="IPR036853">
    <property type="entry name" value="Ribosomal_uL14_sf"/>
</dbReference>
<dbReference type="NCBIfam" id="TIGR01067">
    <property type="entry name" value="rplN_bact"/>
    <property type="match status" value="1"/>
</dbReference>
<dbReference type="PANTHER" id="PTHR11761">
    <property type="entry name" value="50S/60S RIBOSOMAL PROTEIN L14/L23"/>
    <property type="match status" value="1"/>
</dbReference>
<dbReference type="PANTHER" id="PTHR11761:SF3">
    <property type="entry name" value="LARGE RIBOSOMAL SUBUNIT PROTEIN UL14M"/>
    <property type="match status" value="1"/>
</dbReference>
<dbReference type="Pfam" id="PF00238">
    <property type="entry name" value="Ribosomal_L14"/>
    <property type="match status" value="1"/>
</dbReference>
<dbReference type="SMART" id="SM01374">
    <property type="entry name" value="Ribosomal_L14"/>
    <property type="match status" value="1"/>
</dbReference>
<dbReference type="SUPFAM" id="SSF50193">
    <property type="entry name" value="Ribosomal protein L14"/>
    <property type="match status" value="1"/>
</dbReference>
<dbReference type="PROSITE" id="PS00049">
    <property type="entry name" value="RIBOSOMAL_L14"/>
    <property type="match status" value="1"/>
</dbReference>
<feature type="chain" id="PRO_1000055595" description="Large ribosomal subunit protein uL14">
    <location>
        <begin position="1"/>
        <end position="122"/>
    </location>
</feature>
<gene>
    <name evidence="1" type="primary">rplN</name>
    <name type="ordered locus">HPAG1_1254</name>
</gene>
<evidence type="ECO:0000255" key="1">
    <source>
        <dbReference type="HAMAP-Rule" id="MF_01367"/>
    </source>
</evidence>
<evidence type="ECO:0000305" key="2"/>
<keyword id="KW-0687">Ribonucleoprotein</keyword>
<keyword id="KW-0689">Ribosomal protein</keyword>
<keyword id="KW-0694">RNA-binding</keyword>
<keyword id="KW-0699">rRNA-binding</keyword>
<comment type="function">
    <text evidence="1">Binds to 23S rRNA. Forms part of two intersubunit bridges in the 70S ribosome.</text>
</comment>
<comment type="subunit">
    <text evidence="1">Part of the 50S ribosomal subunit. Forms a cluster with proteins L3 and L19. In the 70S ribosome, L14 and L19 interact and together make contacts with the 16S rRNA in bridges B5 and B8.</text>
</comment>
<comment type="similarity">
    <text evidence="1">Belongs to the universal ribosomal protein uL14 family.</text>
</comment>
<organism>
    <name type="scientific">Helicobacter pylori (strain HPAG1)</name>
    <dbReference type="NCBI Taxonomy" id="357544"/>
    <lineage>
        <taxon>Bacteria</taxon>
        <taxon>Pseudomonadati</taxon>
        <taxon>Campylobacterota</taxon>
        <taxon>Epsilonproteobacteria</taxon>
        <taxon>Campylobacterales</taxon>
        <taxon>Helicobacteraceae</taxon>
        <taxon>Helicobacter</taxon>
    </lineage>
</organism>
<name>RL14_HELPH</name>